<gene>
    <name type="primary">WOX6</name>
    <name type="ordered locus">Os03g0325600</name>
    <name type="ordered locus">LOC_Os03g20910</name>
</gene>
<sequence>MEGSSNSPDRQSSGGSPPEERGGGGSGGGGGRSAAGEPVRSRWTPKPEQILILESIFNSGMVNPPKDETVRIRKLLERFGAVGDANVFYWFQNRRSRSRRRQRQMQAAAAAAAAAASSSSPSANTSPAAASAATVQVGLPPGAVVHTMAMGGSACQYEQQASSSSSSGSTGGSSLGLFAHGAGASGAGGYLQASCGASASASSALAPGLMGDVVDSGGSDDLFAISRQMGFVGSPRCSPASSPATPSSAATAAQQQFYSCQLPAATITVFINGVPMEMPRGPIDLRAMFGQDVMLVHSTGALLPVNDYGILMQSLQIGESYFLVARPP</sequence>
<dbReference type="EMBL" id="DP000009">
    <property type="protein sequence ID" value="ABF95709.1"/>
    <property type="molecule type" value="Genomic_DNA"/>
</dbReference>
<dbReference type="EMBL" id="AP008209">
    <property type="protein sequence ID" value="BAF11899.1"/>
    <property type="molecule type" value="Genomic_DNA"/>
</dbReference>
<dbReference type="EMBL" id="AP014959">
    <property type="protein sequence ID" value="BAS83985.1"/>
    <property type="molecule type" value="Genomic_DNA"/>
</dbReference>
<dbReference type="EMBL" id="AK063262">
    <property type="status" value="NOT_ANNOTATED_CDS"/>
    <property type="molecule type" value="mRNA"/>
</dbReference>
<dbReference type="RefSeq" id="XP_015629006.1">
    <property type="nucleotide sequence ID" value="XM_015773520.1"/>
</dbReference>
<dbReference type="SMR" id="Q10M29"/>
<dbReference type="FunCoup" id="Q10M29">
    <property type="interactions" value="2542"/>
</dbReference>
<dbReference type="STRING" id="39947.Q10M29"/>
<dbReference type="iPTMnet" id="Q10M29"/>
<dbReference type="PaxDb" id="39947-Q10M29"/>
<dbReference type="EnsemblPlants" id="Os03t0325600-02">
    <property type="protein sequence ID" value="Os03t0325600-02"/>
    <property type="gene ID" value="Os03g0325600"/>
</dbReference>
<dbReference type="Gramene" id="Os03t0325600-02">
    <property type="protein sequence ID" value="Os03t0325600-02"/>
    <property type="gene ID" value="Os03g0325600"/>
</dbReference>
<dbReference type="KEGG" id="dosa:Os03g0325600"/>
<dbReference type="eggNOG" id="ENOG502QUIQ">
    <property type="taxonomic scope" value="Eukaryota"/>
</dbReference>
<dbReference type="HOGENOM" id="CLU_030463_0_0_1"/>
<dbReference type="InParanoid" id="Q10M29"/>
<dbReference type="OrthoDB" id="670226at2759"/>
<dbReference type="Proteomes" id="UP000000763">
    <property type="component" value="Chromosome 3"/>
</dbReference>
<dbReference type="Proteomes" id="UP000059680">
    <property type="component" value="Chromosome 3"/>
</dbReference>
<dbReference type="ExpressionAtlas" id="Q10M29">
    <property type="expression patterns" value="baseline and differential"/>
</dbReference>
<dbReference type="GO" id="GO:0005634">
    <property type="term" value="C:nucleus"/>
    <property type="evidence" value="ECO:0007669"/>
    <property type="project" value="UniProtKB-SubCell"/>
</dbReference>
<dbReference type="GO" id="GO:0003677">
    <property type="term" value="F:DNA binding"/>
    <property type="evidence" value="ECO:0007669"/>
    <property type="project" value="UniProtKB-KW"/>
</dbReference>
<dbReference type="GO" id="GO:0003700">
    <property type="term" value="F:DNA-binding transcription factor activity"/>
    <property type="evidence" value="ECO:0007669"/>
    <property type="project" value="InterPro"/>
</dbReference>
<dbReference type="GO" id="GO:0048830">
    <property type="term" value="P:adventitious root development"/>
    <property type="evidence" value="ECO:0007669"/>
    <property type="project" value="InterPro"/>
</dbReference>
<dbReference type="FunFam" id="1.10.10.60:FF:000118">
    <property type="entry name" value="WUSCHEL-related homeobox 11"/>
    <property type="match status" value="1"/>
</dbReference>
<dbReference type="Gene3D" id="1.10.10.60">
    <property type="entry name" value="Homeodomain-like"/>
    <property type="match status" value="1"/>
</dbReference>
<dbReference type="InterPro" id="IPR001356">
    <property type="entry name" value="HD"/>
</dbReference>
<dbReference type="InterPro" id="IPR009057">
    <property type="entry name" value="Homeodomain-like_sf"/>
</dbReference>
<dbReference type="InterPro" id="IPR044558">
    <property type="entry name" value="WOX11-like"/>
</dbReference>
<dbReference type="PANTHER" id="PTHR46998">
    <property type="entry name" value="WUSCHEL-RELATED HOMEOBOX 11"/>
    <property type="match status" value="1"/>
</dbReference>
<dbReference type="PANTHER" id="PTHR46998:SF2">
    <property type="entry name" value="WUSCHEL-RELATED HOMEOBOX 11"/>
    <property type="match status" value="1"/>
</dbReference>
<dbReference type="Pfam" id="PF00046">
    <property type="entry name" value="Homeodomain"/>
    <property type="match status" value="1"/>
</dbReference>
<dbReference type="SMART" id="SM00389">
    <property type="entry name" value="HOX"/>
    <property type="match status" value="1"/>
</dbReference>
<dbReference type="SUPFAM" id="SSF46689">
    <property type="entry name" value="Homeodomain-like"/>
    <property type="match status" value="1"/>
</dbReference>
<dbReference type="PROSITE" id="PS50071">
    <property type="entry name" value="HOMEOBOX_2"/>
    <property type="match status" value="1"/>
</dbReference>
<feature type="chain" id="PRO_0000308643" description="WUSCHEL-related homeobox 6">
    <location>
        <begin position="1"/>
        <end position="328"/>
    </location>
</feature>
<feature type="DNA-binding region" description="Homeobox; WUS-type" evidence="2">
    <location>
        <begin position="38"/>
        <end position="102"/>
    </location>
</feature>
<feature type="region of interest" description="Disordered" evidence="3">
    <location>
        <begin position="1"/>
        <end position="45"/>
    </location>
</feature>
<feature type="compositionally biased region" description="Polar residues" evidence="3">
    <location>
        <begin position="1"/>
        <end position="11"/>
    </location>
</feature>
<feature type="compositionally biased region" description="Gly residues" evidence="3">
    <location>
        <begin position="23"/>
        <end position="33"/>
    </location>
</feature>
<feature type="sequence conflict" description="In Ref. 5; AK063262." evidence="4" ref="5">
    <original>G</original>
    <variation>R</variation>
    <location>
        <position position="30"/>
    </location>
</feature>
<name>WOX6_ORYSJ</name>
<protein>
    <recommendedName>
        <fullName>WUSCHEL-related homeobox 6</fullName>
    </recommendedName>
    <alternativeName>
        <fullName>OsWOX6</fullName>
    </alternativeName>
</protein>
<organism>
    <name type="scientific">Oryza sativa subsp. japonica</name>
    <name type="common">Rice</name>
    <dbReference type="NCBI Taxonomy" id="39947"/>
    <lineage>
        <taxon>Eukaryota</taxon>
        <taxon>Viridiplantae</taxon>
        <taxon>Streptophyta</taxon>
        <taxon>Embryophyta</taxon>
        <taxon>Tracheophyta</taxon>
        <taxon>Spermatophyta</taxon>
        <taxon>Magnoliopsida</taxon>
        <taxon>Liliopsida</taxon>
        <taxon>Poales</taxon>
        <taxon>Poaceae</taxon>
        <taxon>BOP clade</taxon>
        <taxon>Oryzoideae</taxon>
        <taxon>Oryzeae</taxon>
        <taxon>Oryzinae</taxon>
        <taxon>Oryza</taxon>
        <taxon>Oryza sativa</taxon>
    </lineage>
</organism>
<proteinExistence type="evidence at transcript level"/>
<keyword id="KW-0217">Developmental protein</keyword>
<keyword id="KW-0238">DNA-binding</keyword>
<keyword id="KW-0371">Homeobox</keyword>
<keyword id="KW-0539">Nucleus</keyword>
<keyword id="KW-1185">Reference proteome</keyword>
<keyword id="KW-0804">Transcription</keyword>
<keyword id="KW-0805">Transcription regulation</keyword>
<comment type="function">
    <text evidence="1">Transcription factor which may be involved in developmental processes.</text>
</comment>
<comment type="subcellular location">
    <subcellularLocation>
        <location evidence="2">Nucleus</location>
    </subcellularLocation>
</comment>
<comment type="similarity">
    <text evidence="4">Belongs to the WUS homeobox family.</text>
</comment>
<evidence type="ECO:0000250" key="1"/>
<evidence type="ECO:0000255" key="2">
    <source>
        <dbReference type="PROSITE-ProRule" id="PRU00108"/>
    </source>
</evidence>
<evidence type="ECO:0000256" key="3">
    <source>
        <dbReference type="SAM" id="MobiDB-lite"/>
    </source>
</evidence>
<evidence type="ECO:0000305" key="4"/>
<accession>Q10M29</accession>
<accession>A0A0N7KH69</accession>
<reference key="1">
    <citation type="journal article" date="2005" name="Genome Res.">
        <title>Sequence, annotation, and analysis of synteny between rice chromosome 3 and diverged grass species.</title>
        <authorList>
            <consortium name="The rice chromosome 3 sequencing consortium"/>
            <person name="Buell C.R."/>
            <person name="Yuan Q."/>
            <person name="Ouyang S."/>
            <person name="Liu J."/>
            <person name="Zhu W."/>
            <person name="Wang A."/>
            <person name="Maiti R."/>
            <person name="Haas B."/>
            <person name="Wortman J."/>
            <person name="Pertea M."/>
            <person name="Jones K.M."/>
            <person name="Kim M."/>
            <person name="Overton L."/>
            <person name="Tsitrin T."/>
            <person name="Fadrosh D."/>
            <person name="Bera J."/>
            <person name="Weaver B."/>
            <person name="Jin S."/>
            <person name="Johri S."/>
            <person name="Reardon M."/>
            <person name="Webb K."/>
            <person name="Hill J."/>
            <person name="Moffat K."/>
            <person name="Tallon L."/>
            <person name="Van Aken S."/>
            <person name="Lewis M."/>
            <person name="Utterback T."/>
            <person name="Feldblyum T."/>
            <person name="Zismann V."/>
            <person name="Iobst S."/>
            <person name="Hsiao J."/>
            <person name="de Vazeille A.R."/>
            <person name="Salzberg S.L."/>
            <person name="White O."/>
            <person name="Fraser C.M."/>
            <person name="Yu Y."/>
            <person name="Kim H."/>
            <person name="Rambo T."/>
            <person name="Currie J."/>
            <person name="Collura K."/>
            <person name="Kernodle-Thompson S."/>
            <person name="Wei F."/>
            <person name="Kudrna K."/>
            <person name="Ammiraju J.S.S."/>
            <person name="Luo M."/>
            <person name="Goicoechea J.L."/>
            <person name="Wing R.A."/>
            <person name="Henry D."/>
            <person name="Oates R."/>
            <person name="Palmer M."/>
            <person name="Pries G."/>
            <person name="Saski C."/>
            <person name="Simmons J."/>
            <person name="Soderlund C."/>
            <person name="Nelson W."/>
            <person name="de la Bastide M."/>
            <person name="Spiegel L."/>
            <person name="Nascimento L."/>
            <person name="Huang E."/>
            <person name="Preston R."/>
            <person name="Zutavern T."/>
            <person name="Palmer L."/>
            <person name="O'Shaughnessy A."/>
            <person name="Dike S."/>
            <person name="McCombie W.R."/>
            <person name="Minx P."/>
            <person name="Cordum H."/>
            <person name="Wilson R."/>
            <person name="Jin W."/>
            <person name="Lee H.R."/>
            <person name="Jiang J."/>
            <person name="Jackson S."/>
        </authorList>
    </citation>
    <scope>NUCLEOTIDE SEQUENCE [LARGE SCALE GENOMIC DNA]</scope>
    <source>
        <strain>cv. Nipponbare</strain>
    </source>
</reference>
<reference key="2">
    <citation type="journal article" date="2005" name="Nature">
        <title>The map-based sequence of the rice genome.</title>
        <authorList>
            <consortium name="International rice genome sequencing project (IRGSP)"/>
        </authorList>
    </citation>
    <scope>NUCLEOTIDE SEQUENCE [LARGE SCALE GENOMIC DNA]</scope>
    <source>
        <strain>cv. Nipponbare</strain>
    </source>
</reference>
<reference key="3">
    <citation type="journal article" date="2008" name="Nucleic Acids Res.">
        <title>The rice annotation project database (RAP-DB): 2008 update.</title>
        <authorList>
            <consortium name="The rice annotation project (RAP)"/>
        </authorList>
    </citation>
    <scope>GENOME REANNOTATION</scope>
    <source>
        <strain>cv. Nipponbare</strain>
    </source>
</reference>
<reference key="4">
    <citation type="journal article" date="2013" name="Rice">
        <title>Improvement of the Oryza sativa Nipponbare reference genome using next generation sequence and optical map data.</title>
        <authorList>
            <person name="Kawahara Y."/>
            <person name="de la Bastide M."/>
            <person name="Hamilton J.P."/>
            <person name="Kanamori H."/>
            <person name="McCombie W.R."/>
            <person name="Ouyang S."/>
            <person name="Schwartz D.C."/>
            <person name="Tanaka T."/>
            <person name="Wu J."/>
            <person name="Zhou S."/>
            <person name="Childs K.L."/>
            <person name="Davidson R.M."/>
            <person name="Lin H."/>
            <person name="Quesada-Ocampo L."/>
            <person name="Vaillancourt B."/>
            <person name="Sakai H."/>
            <person name="Lee S.S."/>
            <person name="Kim J."/>
            <person name="Numa H."/>
            <person name="Itoh T."/>
            <person name="Buell C.R."/>
            <person name="Matsumoto T."/>
        </authorList>
    </citation>
    <scope>GENOME REANNOTATION</scope>
    <source>
        <strain>cv. Nipponbare</strain>
    </source>
</reference>
<reference key="5">
    <citation type="journal article" date="2003" name="Science">
        <title>Collection, mapping, and annotation of over 28,000 cDNA clones from japonica rice.</title>
        <authorList>
            <consortium name="The rice full-length cDNA consortium"/>
        </authorList>
    </citation>
    <scope>NUCLEOTIDE SEQUENCE [LARGE SCALE MRNA]</scope>
    <source>
        <strain>cv. Nipponbare</strain>
    </source>
</reference>
<reference key="6">
    <citation type="journal article" date="2007" name="Plant Physiol.">
        <title>A WUSCHEL-LIKE HOMEOBOX gene represses a YABBY gene expression required for rice leaf development.</title>
        <authorList>
            <person name="Dai M."/>
            <person name="Hu Y."/>
            <person name="Zhao Y."/>
            <person name="Liu H."/>
            <person name="Zhou D.-X."/>
        </authorList>
    </citation>
    <scope>NOMENCLATURE</scope>
</reference>